<organism>
    <name type="scientific">Schizosaccharomyces pombe (strain 972 / ATCC 24843)</name>
    <name type="common">Fission yeast</name>
    <dbReference type="NCBI Taxonomy" id="284812"/>
    <lineage>
        <taxon>Eukaryota</taxon>
        <taxon>Fungi</taxon>
        <taxon>Dikarya</taxon>
        <taxon>Ascomycota</taxon>
        <taxon>Taphrinomycotina</taxon>
        <taxon>Schizosaccharomycetes</taxon>
        <taxon>Schizosaccharomycetales</taxon>
        <taxon>Schizosaccharomycetaceae</taxon>
        <taxon>Schizosaccharomyces</taxon>
    </lineage>
</organism>
<evidence type="ECO:0000255" key="1">
    <source>
        <dbReference type="PROSITE-ProRule" id="PRU00224"/>
    </source>
</evidence>
<evidence type="ECO:0000256" key="2">
    <source>
        <dbReference type="SAM" id="MobiDB-lite"/>
    </source>
</evidence>
<evidence type="ECO:0000269" key="3">
    <source>
    </source>
</evidence>
<evidence type="ECO:0000269" key="4">
    <source>
    </source>
</evidence>
<evidence type="ECO:0000269" key="5">
    <source>
    </source>
</evidence>
<comment type="function">
    <text evidence="5">Component of the spliceosome involved in mRNA processing.</text>
</comment>
<comment type="subunit">
    <text evidence="5">Component of the spliceosomal complex. Interacts with prp19.</text>
</comment>
<comment type="interaction">
    <interactant intactId="EBI-4408349">
        <id>Q09685</id>
    </interactant>
    <interactant intactId="EBI-590830">
        <id>O14011</id>
        <label>prp19</label>
    </interactant>
    <organismsDiffer>false</organismsDiffer>
    <experiments>6</experiments>
</comment>
<comment type="interaction">
    <interactant intactId="EBI-4408349">
        <id>Q09685</id>
    </interactant>
    <interactant intactId="EBI-4421067">
        <id>O74517</id>
        <label>saf1</label>
    </interactant>
    <organismsDiffer>false</organismsDiffer>
    <experiments>4</experiments>
</comment>
<comment type="interaction">
    <interactant intactId="EBI-4408349">
        <id>Q09685</id>
    </interactant>
    <interactant intactId="EBI-4421106">
        <id>Q9P7H6</id>
        <label>SPAC1782.03</label>
    </interactant>
    <organismsDiffer>false</organismsDiffer>
    <experiments>3</experiments>
</comment>
<comment type="interaction">
    <interactant intactId="EBI-4408349">
        <id>Q09685</id>
    </interactant>
    <interactant intactId="EBI-4420697">
        <id>O14097</id>
        <label>SPAC2F3.14c</label>
    </interactant>
    <organismsDiffer>false</organismsDiffer>
    <experiments>3</experiments>
</comment>
<comment type="subcellular location">
    <subcellularLocation>
        <location evidence="4">Nucleus</location>
    </subcellularLocation>
</comment>
<comment type="disruption phenotype">
    <text evidence="3">Cells are defective in DNA replication, S-phase progression, chromatin structure and cytokinesis. Dre4-54 truncated temperature-sensitive mutant has 'Trp-117' changed to a stop codon.</text>
</comment>
<dbReference type="EMBL" id="AY227798">
    <property type="protein sequence ID" value="AAO73008.1"/>
    <property type="molecule type" value="Genomic_DNA"/>
</dbReference>
<dbReference type="EMBL" id="CU329670">
    <property type="protein sequence ID" value="CAA90453.1"/>
    <property type="molecule type" value="Genomic_DNA"/>
</dbReference>
<dbReference type="PIR" id="S58094">
    <property type="entry name" value="S58094"/>
</dbReference>
<dbReference type="RefSeq" id="NP_592930.1">
    <property type="nucleotide sequence ID" value="NM_001018331.2"/>
</dbReference>
<dbReference type="SMR" id="Q09685"/>
<dbReference type="BioGRID" id="278651">
    <property type="interactions" value="40"/>
</dbReference>
<dbReference type="FunCoup" id="Q09685">
    <property type="interactions" value="180"/>
</dbReference>
<dbReference type="IntAct" id="Q09685">
    <property type="interactions" value="35"/>
</dbReference>
<dbReference type="STRING" id="284812.Q09685"/>
<dbReference type="iPTMnet" id="Q09685"/>
<dbReference type="PaxDb" id="4896-SPAC13C5.02.1"/>
<dbReference type="EnsemblFungi" id="SPAC13C5.02.1">
    <property type="protein sequence ID" value="SPAC13C5.02.1:pep"/>
    <property type="gene ID" value="SPAC13C5.02"/>
</dbReference>
<dbReference type="GeneID" id="2542176"/>
<dbReference type="KEGG" id="spo:2542176"/>
<dbReference type="PomBase" id="SPAC13C5.02">
    <property type="gene designation" value="dre4"/>
</dbReference>
<dbReference type="VEuPathDB" id="FungiDB:SPAC13C5.02"/>
<dbReference type="eggNOG" id="KOG0155">
    <property type="taxonomic scope" value="Eukaryota"/>
</dbReference>
<dbReference type="HOGENOM" id="CLU_013872_0_0_1"/>
<dbReference type="InParanoid" id="Q09685"/>
<dbReference type="OMA" id="MLKSTYT"/>
<dbReference type="PhylomeDB" id="Q09685"/>
<dbReference type="PRO" id="PR:Q09685"/>
<dbReference type="Proteomes" id="UP000002485">
    <property type="component" value="Chromosome I"/>
</dbReference>
<dbReference type="GO" id="GO:0005829">
    <property type="term" value="C:cytosol"/>
    <property type="evidence" value="ECO:0007005"/>
    <property type="project" value="PomBase"/>
</dbReference>
<dbReference type="GO" id="GO:0005634">
    <property type="term" value="C:nucleus"/>
    <property type="evidence" value="ECO:0007005"/>
    <property type="project" value="PomBase"/>
</dbReference>
<dbReference type="GO" id="GO:0071004">
    <property type="term" value="C:U2-type prespliceosome"/>
    <property type="evidence" value="ECO:0000318"/>
    <property type="project" value="GO_Central"/>
</dbReference>
<dbReference type="GO" id="GO:0005684">
    <property type="term" value="C:U2-type spliceosomal complex"/>
    <property type="evidence" value="ECO:0000314"/>
    <property type="project" value="PomBase"/>
</dbReference>
<dbReference type="GO" id="GO:0003723">
    <property type="term" value="F:RNA binding"/>
    <property type="evidence" value="ECO:0000318"/>
    <property type="project" value="GO_Central"/>
</dbReference>
<dbReference type="GO" id="GO:0070063">
    <property type="term" value="F:RNA polymerase binding"/>
    <property type="evidence" value="ECO:0007669"/>
    <property type="project" value="InterPro"/>
</dbReference>
<dbReference type="GO" id="GO:0045292">
    <property type="term" value="P:mRNA cis splicing, via spliceosome"/>
    <property type="evidence" value="ECO:0000315"/>
    <property type="project" value="PomBase"/>
</dbReference>
<dbReference type="GO" id="GO:0000398">
    <property type="term" value="P:mRNA splicing, via spliceosome"/>
    <property type="evidence" value="ECO:0000318"/>
    <property type="project" value="GO_Central"/>
</dbReference>
<dbReference type="CDD" id="cd00201">
    <property type="entry name" value="WW"/>
    <property type="match status" value="2"/>
</dbReference>
<dbReference type="FunFam" id="2.20.70.10:FF:000049">
    <property type="entry name" value="Transcription elongation regulator 1-like"/>
    <property type="match status" value="1"/>
</dbReference>
<dbReference type="Gene3D" id="2.20.70.10">
    <property type="match status" value="2"/>
</dbReference>
<dbReference type="Gene3D" id="1.10.10.440">
    <property type="entry name" value="FF domain"/>
    <property type="match status" value="1"/>
</dbReference>
<dbReference type="InterPro" id="IPR002713">
    <property type="entry name" value="FF_domain"/>
</dbReference>
<dbReference type="InterPro" id="IPR036517">
    <property type="entry name" value="FF_domain_sf"/>
</dbReference>
<dbReference type="InterPro" id="IPR045148">
    <property type="entry name" value="TCRG1-like"/>
</dbReference>
<dbReference type="InterPro" id="IPR001202">
    <property type="entry name" value="WW_dom"/>
</dbReference>
<dbReference type="InterPro" id="IPR036020">
    <property type="entry name" value="WW_dom_sf"/>
</dbReference>
<dbReference type="PANTHER" id="PTHR15377">
    <property type="entry name" value="TRANSCRIPTION ELONGATION REGULATOR 1"/>
    <property type="match status" value="1"/>
</dbReference>
<dbReference type="PANTHER" id="PTHR15377:SF3">
    <property type="entry name" value="WW DOMAIN-CONTAINING PROTEIN"/>
    <property type="match status" value="1"/>
</dbReference>
<dbReference type="Pfam" id="PF01846">
    <property type="entry name" value="FF"/>
    <property type="match status" value="1"/>
</dbReference>
<dbReference type="Pfam" id="PF00397">
    <property type="entry name" value="WW"/>
    <property type="match status" value="1"/>
</dbReference>
<dbReference type="SMART" id="SM00441">
    <property type="entry name" value="FF"/>
    <property type="match status" value="1"/>
</dbReference>
<dbReference type="SMART" id="SM00456">
    <property type="entry name" value="WW"/>
    <property type="match status" value="2"/>
</dbReference>
<dbReference type="SUPFAM" id="SSF81698">
    <property type="entry name" value="FF domain"/>
    <property type="match status" value="1"/>
</dbReference>
<dbReference type="SUPFAM" id="SSF51045">
    <property type="entry name" value="WW domain"/>
    <property type="match status" value="2"/>
</dbReference>
<dbReference type="PROSITE" id="PS51676">
    <property type="entry name" value="FF"/>
    <property type="match status" value="1"/>
</dbReference>
<dbReference type="PROSITE" id="PS01159">
    <property type="entry name" value="WW_DOMAIN_1"/>
    <property type="match status" value="2"/>
</dbReference>
<dbReference type="PROSITE" id="PS50020">
    <property type="entry name" value="WW_DOMAIN_2"/>
    <property type="match status" value="2"/>
</dbReference>
<accession>Q09685</accession>
<protein>
    <recommendedName>
        <fullName>Pre-mRNA-splicing factor dre4</fullName>
    </recommendedName>
    <alternativeName>
        <fullName>DNA replication protein 4</fullName>
    </alternativeName>
    <alternativeName>
        <fullName>Hyphal growth protein 1</fullName>
    </alternativeName>
</protein>
<sequence length="411" mass="48519">MSQPLPPGWTEHKAPSGIPYYWNAELKKSTYQRPSFIEKNHSSSVTASQASLAFNTSEKLFVNENAEERKNSRDLRKQLPDRPKFKKRIPNNDSWVVVFTKKNRYFFHNLKSHESYWEPPLEISKDLKILRLPIRKQISKDSSQSQNVDSGKTNHEEIHESRHLQTEIEEPSGLEESSEESVLYSEEFYEKSDEEEDEEKSHSAEELEFGEEDIMYQLQQLDDETVSYDIQEQATNLSTDDARRVFTELLKDKNIGAYQPWELVYPKLLDDDRFYVLDSGERRKEVFEEYCKSVVSTKKITRRKNTLSDFWTLLHSLPSTLLWPQFKRKYRKSSTLQIPGYSERDFEKLFREFQILRKQPMQDKLLNFKKLCKSKTVDPKNPDEFTESILNDTRYAVLTREELDSLACSSN</sequence>
<keyword id="KW-0507">mRNA processing</keyword>
<keyword id="KW-0508">mRNA splicing</keyword>
<keyword id="KW-0539">Nucleus</keyword>
<keyword id="KW-1185">Reference proteome</keyword>
<keyword id="KW-0677">Repeat</keyword>
<keyword id="KW-0747">Spliceosome</keyword>
<proteinExistence type="evidence at protein level"/>
<gene>
    <name type="primary">dre4</name>
    <name type="synonym">hgp1</name>
    <name type="ORF">SPAC13C5.02</name>
</gene>
<feature type="chain" id="PRO_0000076095" description="Pre-mRNA-splicing factor dre4">
    <location>
        <begin position="1"/>
        <end position="411"/>
    </location>
</feature>
<feature type="domain" description="WW 1" evidence="1">
    <location>
        <begin position="3"/>
        <end position="36"/>
    </location>
</feature>
<feature type="domain" description="WW 2" evidence="1">
    <location>
        <begin position="89"/>
        <end position="122"/>
    </location>
</feature>
<feature type="domain" description="FF">
    <location>
        <begin position="239"/>
        <end position="293"/>
    </location>
</feature>
<feature type="region of interest" description="Disordered" evidence="2">
    <location>
        <begin position="65"/>
        <end position="84"/>
    </location>
</feature>
<feature type="region of interest" description="Disordered" evidence="2">
    <location>
        <begin position="138"/>
        <end position="209"/>
    </location>
</feature>
<feature type="compositionally biased region" description="Basic and acidic residues" evidence="2">
    <location>
        <begin position="66"/>
        <end position="83"/>
    </location>
</feature>
<feature type="compositionally biased region" description="Polar residues" evidence="2">
    <location>
        <begin position="140"/>
        <end position="151"/>
    </location>
</feature>
<feature type="compositionally biased region" description="Basic and acidic residues" evidence="2">
    <location>
        <begin position="152"/>
        <end position="166"/>
    </location>
</feature>
<feature type="compositionally biased region" description="Acidic residues" evidence="2">
    <location>
        <begin position="167"/>
        <end position="179"/>
    </location>
</feature>
<name>DRE4_SCHPO</name>
<reference key="1">
    <citation type="submission" date="2003-01" db="EMBL/GenBank/DDBJ databases">
        <title>Hyphal growth in S. pombe: a plausible model to study infectious yeast.</title>
        <authorList>
            <person name="Yao J."/>
            <person name="Leung S.W."/>
            <person name="Uzawa S."/>
            <person name="Lee C.S."/>
            <person name="Joshi H.C."/>
        </authorList>
    </citation>
    <scope>NUCLEOTIDE SEQUENCE [GENOMIC DNA]</scope>
</reference>
<reference key="2">
    <citation type="journal article" date="2002" name="Nature">
        <title>The genome sequence of Schizosaccharomyces pombe.</title>
        <authorList>
            <person name="Wood V."/>
            <person name="Gwilliam R."/>
            <person name="Rajandream M.A."/>
            <person name="Lyne M.H."/>
            <person name="Lyne R."/>
            <person name="Stewart A."/>
            <person name="Sgouros J.G."/>
            <person name="Peat N."/>
            <person name="Hayles J."/>
            <person name="Baker S.G."/>
            <person name="Basham D."/>
            <person name="Bowman S."/>
            <person name="Brooks K."/>
            <person name="Brown D."/>
            <person name="Brown S."/>
            <person name="Chillingworth T."/>
            <person name="Churcher C.M."/>
            <person name="Collins M."/>
            <person name="Connor R."/>
            <person name="Cronin A."/>
            <person name="Davis P."/>
            <person name="Feltwell T."/>
            <person name="Fraser A."/>
            <person name="Gentles S."/>
            <person name="Goble A."/>
            <person name="Hamlin N."/>
            <person name="Harris D.E."/>
            <person name="Hidalgo J."/>
            <person name="Hodgson G."/>
            <person name="Holroyd S."/>
            <person name="Hornsby T."/>
            <person name="Howarth S."/>
            <person name="Huckle E.J."/>
            <person name="Hunt S."/>
            <person name="Jagels K."/>
            <person name="James K.D."/>
            <person name="Jones L."/>
            <person name="Jones M."/>
            <person name="Leather S."/>
            <person name="McDonald S."/>
            <person name="McLean J."/>
            <person name="Mooney P."/>
            <person name="Moule S."/>
            <person name="Mungall K.L."/>
            <person name="Murphy L.D."/>
            <person name="Niblett D."/>
            <person name="Odell C."/>
            <person name="Oliver K."/>
            <person name="O'Neil S."/>
            <person name="Pearson D."/>
            <person name="Quail M.A."/>
            <person name="Rabbinowitsch E."/>
            <person name="Rutherford K.M."/>
            <person name="Rutter S."/>
            <person name="Saunders D."/>
            <person name="Seeger K."/>
            <person name="Sharp S."/>
            <person name="Skelton J."/>
            <person name="Simmonds M.N."/>
            <person name="Squares R."/>
            <person name="Squares S."/>
            <person name="Stevens K."/>
            <person name="Taylor K."/>
            <person name="Taylor R.G."/>
            <person name="Tivey A."/>
            <person name="Walsh S.V."/>
            <person name="Warren T."/>
            <person name="Whitehead S."/>
            <person name="Woodward J.R."/>
            <person name="Volckaert G."/>
            <person name="Aert R."/>
            <person name="Robben J."/>
            <person name="Grymonprez B."/>
            <person name="Weltjens I."/>
            <person name="Vanstreels E."/>
            <person name="Rieger M."/>
            <person name="Schaefer M."/>
            <person name="Mueller-Auer S."/>
            <person name="Gabel C."/>
            <person name="Fuchs M."/>
            <person name="Duesterhoeft A."/>
            <person name="Fritzc C."/>
            <person name="Holzer E."/>
            <person name="Moestl D."/>
            <person name="Hilbert H."/>
            <person name="Borzym K."/>
            <person name="Langer I."/>
            <person name="Beck A."/>
            <person name="Lehrach H."/>
            <person name="Reinhardt R."/>
            <person name="Pohl T.M."/>
            <person name="Eger P."/>
            <person name="Zimmermann W."/>
            <person name="Wedler H."/>
            <person name="Wambutt R."/>
            <person name="Purnelle B."/>
            <person name="Goffeau A."/>
            <person name="Cadieu E."/>
            <person name="Dreano S."/>
            <person name="Gloux S."/>
            <person name="Lelaure V."/>
            <person name="Mottier S."/>
            <person name="Galibert F."/>
            <person name="Aves S.J."/>
            <person name="Xiang Z."/>
            <person name="Hunt C."/>
            <person name="Moore K."/>
            <person name="Hurst S.M."/>
            <person name="Lucas M."/>
            <person name="Rochet M."/>
            <person name="Gaillardin C."/>
            <person name="Tallada V.A."/>
            <person name="Garzon A."/>
            <person name="Thode G."/>
            <person name="Daga R.R."/>
            <person name="Cruzado L."/>
            <person name="Jimenez J."/>
            <person name="Sanchez M."/>
            <person name="del Rey F."/>
            <person name="Benito J."/>
            <person name="Dominguez A."/>
            <person name="Revuelta J.L."/>
            <person name="Moreno S."/>
            <person name="Armstrong J."/>
            <person name="Forsburg S.L."/>
            <person name="Cerutti L."/>
            <person name="Lowe T."/>
            <person name="McCombie W.R."/>
            <person name="Paulsen I."/>
            <person name="Potashkin J."/>
            <person name="Shpakovski G.V."/>
            <person name="Ussery D."/>
            <person name="Barrell B.G."/>
            <person name="Nurse P."/>
        </authorList>
    </citation>
    <scope>NUCLEOTIDE SEQUENCE [LARGE SCALE GENOMIC DNA]</scope>
    <source>
        <strain>972 / ATCC 24843</strain>
    </source>
</reference>
<reference key="3">
    <citation type="journal article" date="2005" name="Genetics">
        <title>A screen for Schizosaccharomyces pombe mutants defective in rereplication identifies new alleles of rad4+, cut9+ and psf2+.</title>
        <authorList>
            <person name="Gomez E.B."/>
            <person name="Angeles V.T."/>
            <person name="Forsburg S.L."/>
        </authorList>
    </citation>
    <scope>DISRUPTION PHENOTYPE</scope>
</reference>
<reference key="4">
    <citation type="journal article" date="2006" name="Nat. Biotechnol.">
        <title>ORFeome cloning and global analysis of protein localization in the fission yeast Schizosaccharomyces pombe.</title>
        <authorList>
            <person name="Matsuyama A."/>
            <person name="Arai R."/>
            <person name="Yashiroda Y."/>
            <person name="Shirai A."/>
            <person name="Kamata A."/>
            <person name="Sekido S."/>
            <person name="Kobayashi Y."/>
            <person name="Hashimoto A."/>
            <person name="Hamamoto M."/>
            <person name="Hiraoka Y."/>
            <person name="Horinouchi S."/>
            <person name="Yoshida M."/>
        </authorList>
    </citation>
    <scope>SUBCELLULAR LOCATION [LARGE SCALE ANALYSIS]</scope>
</reference>
<reference key="5">
    <citation type="journal article" date="2011" name="PLoS ONE">
        <title>Systematic two-hybrid and comparative proteomic analyses reveal novel yeast pre-mRNA splicing factors connected to Prp19.</title>
        <authorList>
            <person name="Ren L."/>
            <person name="McLean J.R."/>
            <person name="Hazbun T.R."/>
            <person name="Fields S."/>
            <person name="Vander Kooi C."/>
            <person name="Ohi M.D."/>
            <person name="Gould K.L."/>
        </authorList>
    </citation>
    <scope>INTERACTION WITH PRP19</scope>
    <scope>IDENTIFICATION IN THE SPLICEOSOME</scope>
    <scope>FUNCTION</scope>
</reference>